<gene>
    <name evidence="1" type="primary">secY2</name>
    <name type="ordered locus">SPSE_0165</name>
</gene>
<organism>
    <name type="scientific">Staphylococcus pseudintermedius (strain ED99)</name>
    <dbReference type="NCBI Taxonomy" id="984892"/>
    <lineage>
        <taxon>Bacteria</taxon>
        <taxon>Bacillati</taxon>
        <taxon>Bacillota</taxon>
        <taxon>Bacilli</taxon>
        <taxon>Bacillales</taxon>
        <taxon>Staphylococcaceae</taxon>
        <taxon>Staphylococcus</taxon>
        <taxon>Staphylococcus intermedius group</taxon>
    </lineage>
</organism>
<proteinExistence type="inferred from homology"/>
<keyword id="KW-1003">Cell membrane</keyword>
<keyword id="KW-0472">Membrane</keyword>
<keyword id="KW-0653">Protein transport</keyword>
<keyword id="KW-0811">Translocation</keyword>
<keyword id="KW-0812">Transmembrane</keyword>
<keyword id="KW-1133">Transmembrane helix</keyword>
<keyword id="KW-0813">Transport</keyword>
<protein>
    <recommendedName>
        <fullName evidence="1">Accessory Sec system protein translocase subunit SecY2</fullName>
    </recommendedName>
</protein>
<evidence type="ECO:0000255" key="1">
    <source>
        <dbReference type="HAMAP-Rule" id="MF_01466"/>
    </source>
</evidence>
<accession>F0P5S5</accession>
<feature type="chain" id="PRO_0000414872" description="Accessory Sec system protein translocase subunit SecY2">
    <location>
        <begin position="1"/>
        <end position="407"/>
    </location>
</feature>
<feature type="transmembrane region" description="Helical" evidence="1">
    <location>
        <begin position="22"/>
        <end position="42"/>
    </location>
</feature>
<feature type="transmembrane region" description="Helical" evidence="1">
    <location>
        <begin position="68"/>
        <end position="88"/>
    </location>
</feature>
<feature type="transmembrane region" description="Helical" evidence="1">
    <location>
        <begin position="108"/>
        <end position="128"/>
    </location>
</feature>
<feature type="transmembrane region" description="Helical" evidence="1">
    <location>
        <begin position="136"/>
        <end position="156"/>
    </location>
</feature>
<feature type="transmembrane region" description="Helical" evidence="1">
    <location>
        <begin position="169"/>
        <end position="189"/>
    </location>
</feature>
<feature type="transmembrane region" description="Helical" evidence="1">
    <location>
        <begin position="191"/>
        <end position="211"/>
    </location>
</feature>
<feature type="transmembrane region" description="Helical" evidence="1">
    <location>
        <begin position="245"/>
        <end position="265"/>
    </location>
</feature>
<feature type="transmembrane region" description="Helical" evidence="1">
    <location>
        <begin position="280"/>
        <end position="300"/>
    </location>
</feature>
<feature type="transmembrane region" description="Helical" evidence="1">
    <location>
        <begin position="343"/>
        <end position="363"/>
    </location>
</feature>
<feature type="transmembrane region" description="Helical" evidence="1">
    <location>
        <begin position="366"/>
        <end position="386"/>
    </location>
</feature>
<dbReference type="EMBL" id="CP002478">
    <property type="protein sequence ID" value="ADX75512.1"/>
    <property type="molecule type" value="Genomic_DNA"/>
</dbReference>
<dbReference type="SMR" id="F0P5S5"/>
<dbReference type="KEGG" id="sdt:SPSE_0165"/>
<dbReference type="PATRIC" id="fig|984892.3.peg.156"/>
<dbReference type="HOGENOM" id="CLU_030313_4_0_9"/>
<dbReference type="GO" id="GO:0005886">
    <property type="term" value="C:plasma membrane"/>
    <property type="evidence" value="ECO:0007669"/>
    <property type="project" value="UniProtKB-SubCell"/>
</dbReference>
<dbReference type="GO" id="GO:0065002">
    <property type="term" value="P:intracellular protein transmembrane transport"/>
    <property type="evidence" value="ECO:0007669"/>
    <property type="project" value="UniProtKB-UniRule"/>
</dbReference>
<dbReference type="GO" id="GO:0006605">
    <property type="term" value="P:protein targeting"/>
    <property type="evidence" value="ECO:0007669"/>
    <property type="project" value="UniProtKB-UniRule"/>
</dbReference>
<dbReference type="Gene3D" id="1.10.3370.10">
    <property type="entry name" value="SecY subunit domain"/>
    <property type="match status" value="1"/>
</dbReference>
<dbReference type="HAMAP" id="MF_01466">
    <property type="entry name" value="SecY2"/>
    <property type="match status" value="1"/>
</dbReference>
<dbReference type="InterPro" id="IPR002208">
    <property type="entry name" value="SecY/SEC61-alpha"/>
</dbReference>
<dbReference type="InterPro" id="IPR014269">
    <property type="entry name" value="SecY2"/>
</dbReference>
<dbReference type="InterPro" id="IPR023201">
    <property type="entry name" value="SecY_dom_sf"/>
</dbReference>
<dbReference type="NCBIfam" id="TIGR02920">
    <property type="entry name" value="acc_sec_Y2"/>
    <property type="match status" value="1"/>
</dbReference>
<dbReference type="NCBIfam" id="NF009082">
    <property type="entry name" value="PRK12417.1"/>
    <property type="match status" value="1"/>
</dbReference>
<dbReference type="Pfam" id="PF00344">
    <property type="entry name" value="SecY"/>
    <property type="match status" value="1"/>
</dbReference>
<dbReference type="PIRSF" id="PIRSF004557">
    <property type="entry name" value="SecY"/>
    <property type="match status" value="1"/>
</dbReference>
<dbReference type="PRINTS" id="PR00303">
    <property type="entry name" value="SECYTRNLCASE"/>
</dbReference>
<dbReference type="SUPFAM" id="SSF103491">
    <property type="entry name" value="Preprotein translocase SecY subunit"/>
    <property type="match status" value="1"/>
</dbReference>
<name>SECY2_STAPE</name>
<comment type="function">
    <text evidence="1">Part of the accessory SecA2/SecY2 system specifically required for export of possible cell wall proteins. The central subunit of a protein translocation channel.</text>
</comment>
<comment type="subunit">
    <text evidence="1">Component of the accessory SecA2/SecY2 protein translocase complex required to export cell wall proteins. May form heterotrimers with SecE and SecG subunits.</text>
</comment>
<comment type="subcellular location">
    <subcellularLocation>
        <location evidence="1">Cell membrane</location>
        <topology evidence="1">Multi-pass membrane protein</topology>
    </subcellularLocation>
</comment>
<comment type="similarity">
    <text evidence="1">Belongs to the SecY/SEC61-alpha family. SecY2 subfamily.</text>
</comment>
<reference key="1">
    <citation type="journal article" date="2011" name="J. Bacteriol.">
        <title>Complete genome sequence of the canine pathogen Staphylococcus pseudintermedius.</title>
        <authorList>
            <person name="Zakour N.L."/>
            <person name="Bannoehr J."/>
            <person name="van den Broek A.H."/>
            <person name="Thoday K.L."/>
            <person name="Fitzgerald J.R."/>
        </authorList>
    </citation>
    <scope>NUCLEOTIDE SEQUENCE [LARGE SCALE GENOMIC DNA]</scope>
    <source>
        <strain>ED99</strain>
    </source>
</reference>
<sequence>MKNNRITKIINQYEYKIFYKRIAFTILILLIYILGSKITIVDENAMRQHDSAFYKLAVSNMGGDIHQLNVFSLGLGPWLTAMIIISLITYKNMEKAMHQTRAEKHYKEKFLTLGLSIIQGYFVINQFVRHTDAKRFTELLLLLILVTGAMLMMWLADQNMRYGIAGPMPIVLLSVIKSMFTQSLPIVSIEILMLVVMVILIIVALFILLLTELIEYRIHYRDIIEMPTPGQPTYLAWKINPGGSISIMISLSVFLLLTSTINLIFNMVTGKTPHLQWLSFGHYMGVTIYLILQTVLGYLLSRLIVNTKQNTKDFLKNGNYFIGIRPGADTGNYLNHLAKRLCWFGTTIVTAIIGVPLYISLLVPDLSEYIYFAVQLMIMVYLAMNITETMRTYLYFDKYGAFLNQYW</sequence>